<feature type="chain" id="PRO_0000225060" description="UDP-N-acetylglucosamine--N-acetylmuramyl-(pentapeptide) pyrophosphoryl-undecaprenol N-acetylglucosamine transferase">
    <location>
        <begin position="1"/>
        <end position="368"/>
    </location>
</feature>
<feature type="binding site" evidence="1">
    <location>
        <begin position="10"/>
        <end position="12"/>
    </location>
    <ligand>
        <name>UDP-N-acetyl-alpha-D-glucosamine</name>
        <dbReference type="ChEBI" id="CHEBI:57705"/>
    </ligand>
</feature>
<feature type="binding site" evidence="1">
    <location>
        <position position="126"/>
    </location>
    <ligand>
        <name>UDP-N-acetyl-alpha-D-glucosamine</name>
        <dbReference type="ChEBI" id="CHEBI:57705"/>
    </ligand>
</feature>
<feature type="binding site" evidence="1">
    <location>
        <position position="200"/>
    </location>
    <ligand>
        <name>UDP-N-acetyl-alpha-D-glucosamine</name>
        <dbReference type="ChEBI" id="CHEBI:57705"/>
    </ligand>
</feature>
<feature type="binding site" evidence="1">
    <location>
        <position position="255"/>
    </location>
    <ligand>
        <name>UDP-N-acetyl-alpha-D-glucosamine</name>
        <dbReference type="ChEBI" id="CHEBI:57705"/>
    </ligand>
</feature>
<feature type="binding site" evidence="1">
    <location>
        <position position="300"/>
    </location>
    <ligand>
        <name>UDP-N-acetyl-alpha-D-glucosamine</name>
        <dbReference type="ChEBI" id="CHEBI:57705"/>
    </ligand>
</feature>
<proteinExistence type="inferred from homology"/>
<organism>
    <name type="scientific">Lactobacillus acidophilus (strain ATCC 700396 / NCK56 / N2 / NCFM)</name>
    <dbReference type="NCBI Taxonomy" id="272621"/>
    <lineage>
        <taxon>Bacteria</taxon>
        <taxon>Bacillati</taxon>
        <taxon>Bacillota</taxon>
        <taxon>Bacilli</taxon>
        <taxon>Lactobacillales</taxon>
        <taxon>Lactobacillaceae</taxon>
        <taxon>Lactobacillus</taxon>
    </lineage>
</organism>
<evidence type="ECO:0000255" key="1">
    <source>
        <dbReference type="HAMAP-Rule" id="MF_00033"/>
    </source>
</evidence>
<dbReference type="EC" id="2.4.1.227" evidence="1"/>
<dbReference type="EMBL" id="CP000033">
    <property type="protein sequence ID" value="AAV42672.1"/>
    <property type="molecule type" value="Genomic_DNA"/>
</dbReference>
<dbReference type="RefSeq" id="WP_011254256.1">
    <property type="nucleotide sequence ID" value="NC_006814.3"/>
</dbReference>
<dbReference type="RefSeq" id="YP_193703.1">
    <property type="nucleotide sequence ID" value="NC_006814.3"/>
</dbReference>
<dbReference type="SMR" id="Q5FKV2"/>
<dbReference type="STRING" id="272621.LBA0809"/>
<dbReference type="CAZy" id="GT28">
    <property type="family name" value="Glycosyltransferase Family 28"/>
</dbReference>
<dbReference type="KEGG" id="lac:LBA0809"/>
<dbReference type="PATRIC" id="fig|272621.13.peg.771"/>
<dbReference type="eggNOG" id="COG0707">
    <property type="taxonomic scope" value="Bacteria"/>
</dbReference>
<dbReference type="HOGENOM" id="CLU_037404_0_1_9"/>
<dbReference type="OrthoDB" id="9808936at2"/>
<dbReference type="BioCyc" id="LACI272621:G1G49-822-MONOMER"/>
<dbReference type="UniPathway" id="UPA00219"/>
<dbReference type="Proteomes" id="UP000006381">
    <property type="component" value="Chromosome"/>
</dbReference>
<dbReference type="GO" id="GO:0005886">
    <property type="term" value="C:plasma membrane"/>
    <property type="evidence" value="ECO:0007669"/>
    <property type="project" value="UniProtKB-SubCell"/>
</dbReference>
<dbReference type="GO" id="GO:0050511">
    <property type="term" value="F:undecaprenyldiphospho-muramoylpentapeptide beta-N-acetylglucosaminyltransferase activity"/>
    <property type="evidence" value="ECO:0007669"/>
    <property type="project" value="UniProtKB-UniRule"/>
</dbReference>
<dbReference type="GO" id="GO:0005975">
    <property type="term" value="P:carbohydrate metabolic process"/>
    <property type="evidence" value="ECO:0007669"/>
    <property type="project" value="InterPro"/>
</dbReference>
<dbReference type="GO" id="GO:0051301">
    <property type="term" value="P:cell division"/>
    <property type="evidence" value="ECO:0007669"/>
    <property type="project" value="UniProtKB-KW"/>
</dbReference>
<dbReference type="GO" id="GO:0071555">
    <property type="term" value="P:cell wall organization"/>
    <property type="evidence" value="ECO:0007669"/>
    <property type="project" value="UniProtKB-KW"/>
</dbReference>
<dbReference type="GO" id="GO:0030259">
    <property type="term" value="P:lipid glycosylation"/>
    <property type="evidence" value="ECO:0007669"/>
    <property type="project" value="UniProtKB-UniRule"/>
</dbReference>
<dbReference type="GO" id="GO:0009252">
    <property type="term" value="P:peptidoglycan biosynthetic process"/>
    <property type="evidence" value="ECO:0007669"/>
    <property type="project" value="UniProtKB-UniRule"/>
</dbReference>
<dbReference type="GO" id="GO:0008360">
    <property type="term" value="P:regulation of cell shape"/>
    <property type="evidence" value="ECO:0007669"/>
    <property type="project" value="UniProtKB-KW"/>
</dbReference>
<dbReference type="CDD" id="cd03785">
    <property type="entry name" value="GT28_MurG"/>
    <property type="match status" value="1"/>
</dbReference>
<dbReference type="Gene3D" id="3.40.50.2000">
    <property type="entry name" value="Glycogen Phosphorylase B"/>
    <property type="match status" value="2"/>
</dbReference>
<dbReference type="HAMAP" id="MF_00033">
    <property type="entry name" value="MurG"/>
    <property type="match status" value="1"/>
</dbReference>
<dbReference type="InterPro" id="IPR006009">
    <property type="entry name" value="GlcNAc_MurG"/>
</dbReference>
<dbReference type="InterPro" id="IPR007235">
    <property type="entry name" value="Glyco_trans_28_C"/>
</dbReference>
<dbReference type="InterPro" id="IPR004276">
    <property type="entry name" value="GlycoTrans_28_N"/>
</dbReference>
<dbReference type="NCBIfam" id="TIGR01133">
    <property type="entry name" value="murG"/>
    <property type="match status" value="1"/>
</dbReference>
<dbReference type="PANTHER" id="PTHR21015:SF22">
    <property type="entry name" value="GLYCOSYLTRANSFERASE"/>
    <property type="match status" value="1"/>
</dbReference>
<dbReference type="PANTHER" id="PTHR21015">
    <property type="entry name" value="UDP-N-ACETYLGLUCOSAMINE--N-ACETYLMURAMYL-(PENTAPEPTIDE) PYROPHOSPHORYL-UNDECAPRENOL N-ACETYLGLUCOSAMINE TRANSFERASE 1"/>
    <property type="match status" value="1"/>
</dbReference>
<dbReference type="Pfam" id="PF04101">
    <property type="entry name" value="Glyco_tran_28_C"/>
    <property type="match status" value="1"/>
</dbReference>
<dbReference type="Pfam" id="PF03033">
    <property type="entry name" value="Glyco_transf_28"/>
    <property type="match status" value="1"/>
</dbReference>
<dbReference type="SUPFAM" id="SSF53756">
    <property type="entry name" value="UDP-Glycosyltransferase/glycogen phosphorylase"/>
    <property type="match status" value="1"/>
</dbReference>
<protein>
    <recommendedName>
        <fullName evidence="1">UDP-N-acetylglucosamine--N-acetylmuramyl-(pentapeptide) pyrophosphoryl-undecaprenol N-acetylglucosamine transferase</fullName>
        <ecNumber evidence="1">2.4.1.227</ecNumber>
    </recommendedName>
    <alternativeName>
        <fullName evidence="1">Undecaprenyl-PP-MurNAc-pentapeptide-UDPGlcNAc GlcNAc transferase</fullName>
    </alternativeName>
</protein>
<sequence>MRVIFTGGGTGGHIYPIMAIIERLKERGISKNDEILFVGTQKGLESKIVPAAGVNFETIQIQGFNRKHPLKNFETIKLFFQATKSARKILQEFKPDVVLGTGGYVSGAMVYEAAKMHIPTMIHESNSVVGLANKFLGHYVDKICYTFDDAAKEFPEKKKLVKTGNPRSQQVLGLHEDKVNLQKELGLNPQMPTVLVFGGSRGALAINRIMLKSLMELKKKPYQIIWATGTYYFDSVQKKLEGVDYGDNIKILPYIQNMPALLPEMTCVVSRSGATSIAEFTALGVPVILIPSPNVTHNHQMKNALDLQKAGAALVIPEDDLNPNNFVSSIDHILLDEKYANEMSEASKALGVPDASDQVIKVMEEISR</sequence>
<accession>Q5FKV2</accession>
<name>MURG_LACAC</name>
<reference key="1">
    <citation type="journal article" date="2005" name="Proc. Natl. Acad. Sci. U.S.A.">
        <title>Complete genome sequence of the probiotic lactic acid bacterium Lactobacillus acidophilus NCFM.</title>
        <authorList>
            <person name="Altermann E."/>
            <person name="Russell W.M."/>
            <person name="Azcarate-Peril M.A."/>
            <person name="Barrangou R."/>
            <person name="Buck B.L."/>
            <person name="McAuliffe O."/>
            <person name="Souther N."/>
            <person name="Dobson A."/>
            <person name="Duong T."/>
            <person name="Callanan M."/>
            <person name="Lick S."/>
            <person name="Hamrick A."/>
            <person name="Cano R."/>
            <person name="Klaenhammer T.R."/>
        </authorList>
    </citation>
    <scope>NUCLEOTIDE SEQUENCE [LARGE SCALE GENOMIC DNA]</scope>
    <source>
        <strain>ATCC 700396 / NCK56 / N2 / NCFM</strain>
    </source>
</reference>
<keyword id="KW-0131">Cell cycle</keyword>
<keyword id="KW-0132">Cell division</keyword>
<keyword id="KW-1003">Cell membrane</keyword>
<keyword id="KW-0133">Cell shape</keyword>
<keyword id="KW-0961">Cell wall biogenesis/degradation</keyword>
<keyword id="KW-0328">Glycosyltransferase</keyword>
<keyword id="KW-0472">Membrane</keyword>
<keyword id="KW-0573">Peptidoglycan synthesis</keyword>
<keyword id="KW-1185">Reference proteome</keyword>
<keyword id="KW-0808">Transferase</keyword>
<gene>
    <name evidence="1" type="primary">murG</name>
    <name type="ordered locus">LBA0809</name>
</gene>
<comment type="function">
    <text evidence="1">Cell wall formation. Catalyzes the transfer of a GlcNAc subunit on undecaprenyl-pyrophosphoryl-MurNAc-pentapeptide (lipid intermediate I) to form undecaprenyl-pyrophosphoryl-MurNAc-(pentapeptide)GlcNAc (lipid intermediate II).</text>
</comment>
<comment type="catalytic activity">
    <reaction evidence="1">
        <text>Mur2Ac(oyl-L-Ala-gamma-D-Glu-L-Lys-D-Ala-D-Ala)-di-trans,octa-cis-undecaprenyl diphosphate + UDP-N-acetyl-alpha-D-glucosamine = beta-D-GlcNAc-(1-&gt;4)-Mur2Ac(oyl-L-Ala-gamma-D-Glu-L-Lys-D-Ala-D-Ala)-di-trans,octa-cis-undecaprenyl diphosphate + UDP + H(+)</text>
        <dbReference type="Rhea" id="RHEA:23192"/>
        <dbReference type="ChEBI" id="CHEBI:15378"/>
        <dbReference type="ChEBI" id="CHEBI:57705"/>
        <dbReference type="ChEBI" id="CHEBI:58223"/>
        <dbReference type="ChEBI" id="CHEBI:60032"/>
        <dbReference type="ChEBI" id="CHEBI:60033"/>
        <dbReference type="EC" id="2.4.1.227"/>
    </reaction>
</comment>
<comment type="pathway">
    <text evidence="1">Cell wall biogenesis; peptidoglycan biosynthesis.</text>
</comment>
<comment type="subcellular location">
    <subcellularLocation>
        <location evidence="1">Cell membrane</location>
        <topology evidence="1">Peripheral membrane protein</topology>
        <orientation evidence="1">Cytoplasmic side</orientation>
    </subcellularLocation>
</comment>
<comment type="similarity">
    <text evidence="1">Belongs to the glycosyltransferase 28 family. MurG subfamily.</text>
</comment>